<organism>
    <name type="scientific">Trypanosoma brucei brucei</name>
    <dbReference type="NCBI Taxonomy" id="5702"/>
    <lineage>
        <taxon>Eukaryota</taxon>
        <taxon>Discoba</taxon>
        <taxon>Euglenozoa</taxon>
        <taxon>Kinetoplastea</taxon>
        <taxon>Metakinetoplastina</taxon>
        <taxon>Trypanosomatida</taxon>
        <taxon>Trypanosomatidae</taxon>
        <taxon>Trypanosoma</taxon>
    </lineage>
</organism>
<gene>
    <name type="primary">RNR1</name>
</gene>
<accession>O15909</accession>
<dbReference type="EC" id="1.17.4.1" evidence="5"/>
<dbReference type="EMBL" id="U80910">
    <property type="protein sequence ID" value="AAB70704.1"/>
    <property type="molecule type" value="mRNA"/>
</dbReference>
<dbReference type="SMR" id="O15909"/>
<dbReference type="GO" id="GO:0005654">
    <property type="term" value="C:nucleoplasm"/>
    <property type="evidence" value="ECO:0000314"/>
    <property type="project" value="GeneDB"/>
</dbReference>
<dbReference type="GO" id="GO:0005971">
    <property type="term" value="C:ribonucleoside-diphosphate reductase complex"/>
    <property type="evidence" value="ECO:0000304"/>
    <property type="project" value="GeneDB"/>
</dbReference>
<dbReference type="GO" id="GO:0005524">
    <property type="term" value="F:ATP binding"/>
    <property type="evidence" value="ECO:0007669"/>
    <property type="project" value="UniProtKB-KW"/>
</dbReference>
<dbReference type="GO" id="GO:0004748">
    <property type="term" value="F:ribonucleoside-diphosphate reductase activity, thioredoxin disulfide as acceptor"/>
    <property type="evidence" value="ECO:0000314"/>
    <property type="project" value="GeneDB"/>
</dbReference>
<dbReference type="GO" id="GO:0009263">
    <property type="term" value="P:deoxyribonucleotide biosynthetic process"/>
    <property type="evidence" value="ECO:0000250"/>
    <property type="project" value="UniProtKB"/>
</dbReference>
<dbReference type="GO" id="GO:0006260">
    <property type="term" value="P:DNA replication"/>
    <property type="evidence" value="ECO:0000255"/>
    <property type="project" value="GeneDB"/>
</dbReference>
<dbReference type="CDD" id="cd01679">
    <property type="entry name" value="RNR_I"/>
    <property type="match status" value="1"/>
</dbReference>
<dbReference type="FunFam" id="3.20.70.20:FF:000010">
    <property type="entry name" value="Ribonucleoside-diphosphate reductase"/>
    <property type="match status" value="1"/>
</dbReference>
<dbReference type="Gene3D" id="3.20.70.20">
    <property type="match status" value="1"/>
</dbReference>
<dbReference type="InterPro" id="IPR005144">
    <property type="entry name" value="ATP-cone_dom"/>
</dbReference>
<dbReference type="InterPro" id="IPR013346">
    <property type="entry name" value="NrdE_NrdA_C"/>
</dbReference>
<dbReference type="InterPro" id="IPR000788">
    <property type="entry name" value="RNR_lg_C"/>
</dbReference>
<dbReference type="InterPro" id="IPR013509">
    <property type="entry name" value="RNR_lsu_N"/>
</dbReference>
<dbReference type="InterPro" id="IPR008926">
    <property type="entry name" value="RNR_R1-su_N"/>
</dbReference>
<dbReference type="InterPro" id="IPR039718">
    <property type="entry name" value="Rrm1"/>
</dbReference>
<dbReference type="NCBIfam" id="TIGR02506">
    <property type="entry name" value="NrdE_NrdA"/>
    <property type="match status" value="1"/>
</dbReference>
<dbReference type="PANTHER" id="PTHR11573">
    <property type="entry name" value="RIBONUCLEOSIDE-DIPHOSPHATE REDUCTASE LARGE CHAIN"/>
    <property type="match status" value="1"/>
</dbReference>
<dbReference type="PANTHER" id="PTHR11573:SF6">
    <property type="entry name" value="RIBONUCLEOSIDE-DIPHOSPHATE REDUCTASE LARGE SUBUNIT"/>
    <property type="match status" value="1"/>
</dbReference>
<dbReference type="Pfam" id="PF03477">
    <property type="entry name" value="ATP-cone"/>
    <property type="match status" value="1"/>
</dbReference>
<dbReference type="Pfam" id="PF02867">
    <property type="entry name" value="Ribonuc_red_lgC"/>
    <property type="match status" value="1"/>
</dbReference>
<dbReference type="Pfam" id="PF00317">
    <property type="entry name" value="Ribonuc_red_lgN"/>
    <property type="match status" value="1"/>
</dbReference>
<dbReference type="PRINTS" id="PR01183">
    <property type="entry name" value="RIBORDTASEM1"/>
</dbReference>
<dbReference type="SUPFAM" id="SSF51998">
    <property type="entry name" value="PFL-like glycyl radical enzymes"/>
    <property type="match status" value="1"/>
</dbReference>
<dbReference type="SUPFAM" id="SSF48168">
    <property type="entry name" value="R1 subunit of ribonucleotide reductase, N-terminal domain"/>
    <property type="match status" value="1"/>
</dbReference>
<dbReference type="PROSITE" id="PS51161">
    <property type="entry name" value="ATP_CONE"/>
    <property type="match status" value="1"/>
</dbReference>
<dbReference type="PROSITE" id="PS00089">
    <property type="entry name" value="RIBORED_LARGE"/>
    <property type="match status" value="1"/>
</dbReference>
<reference key="1">
    <citation type="journal article" date="1997" name="Proc. Natl. Acad. Sci. U.S.A.">
        <title>Cloning and characterization of the R1 and R2 subunits of ribonucleotide reductase from Trypanosoma brucei.</title>
        <authorList>
            <person name="Hofer A."/>
            <person name="Schmidt P.P."/>
            <person name="Graslund A."/>
            <person name="Thelander L."/>
        </authorList>
    </citation>
    <scope>NUCLEOTIDE SEQUENCE [MRNA]</scope>
    <scope>FUNCTION</scope>
    <scope>CATALYTIC ACTIVITY</scope>
    <scope>ACTIVITY REGULATION</scope>
    <source>
        <strain>427</strain>
    </source>
</reference>
<evidence type="ECO:0000250" key="1"/>
<evidence type="ECO:0000250" key="2">
    <source>
        <dbReference type="UniProtKB" id="P23921"/>
    </source>
</evidence>
<evidence type="ECO:0000255" key="3">
    <source>
        <dbReference type="PROSITE-ProRule" id="PRU00492"/>
    </source>
</evidence>
<evidence type="ECO:0000256" key="4">
    <source>
        <dbReference type="SAM" id="MobiDB-lite"/>
    </source>
</evidence>
<evidence type="ECO:0000269" key="5">
    <source>
    </source>
</evidence>
<evidence type="ECO:0000303" key="6">
    <source>
    </source>
</evidence>
<evidence type="ECO:0000305" key="7"/>
<sequence>MLETVKLVTKRDGSVEPYDEKVVRSRIVNLMSGIDSYYVDVDDLVRVVGEGVREGMSTSMLDELLAETAAYCVTKHPDYGLLAGRLAVTALHKTTTESVLDSFRVLHEHVSQATKRHAPLISEELWDIANKHSAALQQIINYERDFDFEYFGYKTLERSYLLRVHKGRGVMEVVERPQQMFLRVALGIHGEDLERVKETYDYMSQGFFTHATPTLFNAGTPFPQMSSCFLVAMREDSIDGIYDTLKQCAIISKSAGGIGIHMHNIRAAGSYIAGTNGTSNGLVPMLRVWNNTARYVDQGGGKRKGAFAIYLEPWHADIFGFLLLKKNTGKEDQRARDLFYGLWIPDLFMERVESHGTWTLMDPNTAPFLSDCYGQEFTDLYERYEREGRGVRTIQAQELWFLILESQVETGVPFMLYKDACNFKSNQKNLGTIKCSNLCTEIVEYTSRDEVAVCNLASIALPRFVKDGAFDYVALKEVTKVVTRNLNRVIDRNHYPVCEARYSNLRHRPVGIGVQGLADAFALLSLPFAHPEAKKLNRQIFETIYIAAVEASTELAEKDGPYETFKGSPASEGKLQFDLWDEERRIRGMNEDSVHSHCGLWDWDSLKERVVKVGMRNSLLIAPMPTASTSQILGNNECIEPFTSNIYVRRVLSGEFPVVNKHLVKELIRLRLWNDDMRRKIIALNGSVSGIKEIPERIRELYKVVWEIRQKDLIDMAADRGRYIDQSQSLNLFLATPTSSQLTSMHFYSWKKGLKTGMYYLRSQPAADAIKFTLDPKAMKELPKPDKQSKEEVHGSVGRGKRKRVGEKPTANHSNAGAPNLNGPPDTDGDGGCLNCGS</sequence>
<protein>
    <recommendedName>
        <fullName>Ribonucleoside-diphosphate reductase large subunit</fullName>
        <ecNumber evidence="5">1.17.4.1</ecNumber>
    </recommendedName>
    <alternativeName>
        <fullName evidence="6">Ribonucleotide reductase R1 subunit</fullName>
    </alternativeName>
</protein>
<comment type="function">
    <text evidence="5">Provides the precursors necessary for DNA synthesis. Catalyzes the rate limiting step in the de novo synthesis of deoxyribonucleotides by directly reducing ribonucleotides to the corresponding deoxyribonucleotides.</text>
</comment>
<comment type="catalytic activity">
    <reaction evidence="5">
        <text>a 2'-deoxyribonucleoside 5'-diphosphate + [thioredoxin]-disulfide + H2O = a ribonucleoside 5'-diphosphate + [thioredoxin]-dithiol</text>
        <dbReference type="Rhea" id="RHEA:23252"/>
        <dbReference type="Rhea" id="RHEA-COMP:10698"/>
        <dbReference type="Rhea" id="RHEA-COMP:10700"/>
        <dbReference type="ChEBI" id="CHEBI:15377"/>
        <dbReference type="ChEBI" id="CHEBI:29950"/>
        <dbReference type="ChEBI" id="CHEBI:50058"/>
        <dbReference type="ChEBI" id="CHEBI:57930"/>
        <dbReference type="ChEBI" id="CHEBI:73316"/>
        <dbReference type="EC" id="1.17.4.1"/>
    </reaction>
    <physiologicalReaction direction="right-to-left" evidence="5">
        <dbReference type="Rhea" id="RHEA:23254"/>
    </physiologicalReaction>
</comment>
<comment type="catalytic activity">
    <reaction evidence="5">
        <text>dCDP + [thioredoxin]-disulfide + H2O = CDP + [thioredoxin]-dithiol</text>
        <dbReference type="Rhea" id="RHEA:28038"/>
        <dbReference type="Rhea" id="RHEA-COMP:10698"/>
        <dbReference type="Rhea" id="RHEA-COMP:10700"/>
        <dbReference type="ChEBI" id="CHEBI:15377"/>
        <dbReference type="ChEBI" id="CHEBI:29950"/>
        <dbReference type="ChEBI" id="CHEBI:50058"/>
        <dbReference type="ChEBI" id="CHEBI:58069"/>
        <dbReference type="ChEBI" id="CHEBI:58593"/>
        <dbReference type="EC" id="1.17.4.1"/>
    </reaction>
    <physiologicalReaction direction="right-to-left" evidence="5">
        <dbReference type="Rhea" id="RHEA:28040"/>
    </physiologicalReaction>
</comment>
<comment type="activity regulation">
    <text evidence="5">Under complex allosteric control mediated by deoxynucleoside triphosphates and ATP binding to separate specificity and activation sites on the large subunit. The type of nucleotide bound at the specificity site determines substrate preference. It seems probable that ATP makes the enzyme reduce CDP and UDP, dGTP favors ADP reduction and dTTP favors GDP reduction. Stimulated by ATP and inhibited by dATP binding to the activity site.</text>
</comment>
<comment type="subunit">
    <text>Heterodimer of a large and a small subunit.</text>
</comment>
<comment type="similarity">
    <text evidence="7">Belongs to the ribonucleoside diphosphate reductase large chain family.</text>
</comment>
<name>RIR1_TRYBB</name>
<feature type="chain" id="PRO_0000187199" description="Ribonucleoside-diphosphate reductase large subunit">
    <location>
        <begin position="1"/>
        <end position="838"/>
    </location>
</feature>
<feature type="domain" description="ATP-cone" evidence="3">
    <location>
        <begin position="6"/>
        <end position="97"/>
    </location>
</feature>
<feature type="region of interest" description="Disordered" evidence="4">
    <location>
        <begin position="780"/>
        <end position="838"/>
    </location>
</feature>
<feature type="compositionally biased region" description="Basic and acidic residues" evidence="4">
    <location>
        <begin position="780"/>
        <end position="794"/>
    </location>
</feature>
<feature type="active site" description="Proton acceptor" evidence="1">
    <location>
        <position position="437"/>
    </location>
</feature>
<feature type="active site" description="Cysteine radical intermediate" evidence="1">
    <location>
        <position position="439"/>
    </location>
</feature>
<feature type="active site" description="Proton acceptor" evidence="1">
    <location>
        <position position="441"/>
    </location>
</feature>
<feature type="binding site" evidence="2">
    <location>
        <begin position="10"/>
        <end position="11"/>
    </location>
    <ligand>
        <name>ATP</name>
        <dbReference type="ChEBI" id="CHEBI:30616"/>
        <note>allosteric activator</note>
    </ligand>
</feature>
<feature type="binding site" evidence="2">
    <location>
        <begin position="16"/>
        <end position="22"/>
    </location>
    <ligand>
        <name>ATP</name>
        <dbReference type="ChEBI" id="CHEBI:30616"/>
        <note>allosteric activator</note>
    </ligand>
</feature>
<feature type="binding site" evidence="2">
    <location>
        <position position="58"/>
    </location>
    <ligand>
        <name>ATP</name>
        <dbReference type="ChEBI" id="CHEBI:30616"/>
        <note>allosteric activator</note>
    </ligand>
</feature>
<feature type="binding site" evidence="2">
    <location>
        <position position="62"/>
    </location>
    <ligand>
        <name>ATP</name>
        <dbReference type="ChEBI" id="CHEBI:30616"/>
        <note>allosteric activator</note>
    </ligand>
</feature>
<feature type="binding site" evidence="2">
    <location>
        <position position="227"/>
    </location>
    <ligand>
        <name>GDP</name>
        <dbReference type="ChEBI" id="CHEBI:58189"/>
    </ligand>
</feature>
<feature type="binding site" evidence="2">
    <location>
        <begin position="236"/>
        <end position="238"/>
    </location>
    <ligand>
        <name>dTTP</name>
        <dbReference type="ChEBI" id="CHEBI:37568"/>
        <note>allosteric effector that controls substrate specificity</note>
    </ligand>
</feature>
<feature type="binding site" evidence="2">
    <location>
        <position position="253"/>
    </location>
    <ligand>
        <name>dTTP</name>
        <dbReference type="ChEBI" id="CHEBI:37568"/>
        <note>allosteric effector that controls substrate specificity</note>
    </ligand>
</feature>
<feature type="binding site" evidence="2">
    <location>
        <position position="266"/>
    </location>
    <ligand>
        <name>dTTP</name>
        <dbReference type="ChEBI" id="CHEBI:37568"/>
        <note>allosteric effector that controls substrate specificity</note>
    </ligand>
</feature>
<feature type="binding site" evidence="2">
    <location>
        <begin position="273"/>
        <end position="274"/>
    </location>
    <ligand>
        <name>dTTP</name>
        <dbReference type="ChEBI" id="CHEBI:37568"/>
        <note>allosteric effector that controls substrate specificity</note>
    </ligand>
</feature>
<feature type="binding site" evidence="2">
    <location>
        <position position="437"/>
    </location>
    <ligand>
        <name>GDP</name>
        <dbReference type="ChEBI" id="CHEBI:58189"/>
    </ligand>
</feature>
<feature type="binding site" evidence="2">
    <location>
        <position position="441"/>
    </location>
    <ligand>
        <name>GDP</name>
        <dbReference type="ChEBI" id="CHEBI:58189"/>
    </ligand>
</feature>
<feature type="binding site" evidence="2">
    <location>
        <begin position="626"/>
        <end position="629"/>
    </location>
    <ligand>
        <name>GDP</name>
        <dbReference type="ChEBI" id="CHEBI:58189"/>
    </ligand>
</feature>
<feature type="site" description="Important for hydrogen atom transfer" evidence="1">
    <location>
        <position position="228"/>
    </location>
</feature>
<feature type="site" description="Important for hydrogen atom transfer" evidence="1">
    <location>
        <position position="454"/>
    </location>
</feature>
<feature type="site" description="Important for electron transfer" evidence="1">
    <location>
        <position position="759"/>
    </location>
</feature>
<feature type="site" description="Important for electron transfer" evidence="1">
    <location>
        <position position="760"/>
    </location>
</feature>
<feature type="site" description="Interacts with thioredoxin/glutaredoxin" evidence="1">
    <location>
        <position position="833"/>
    </location>
</feature>
<feature type="site" description="Interacts with thioredoxin/glutaredoxin" evidence="1">
    <location>
        <position position="836"/>
    </location>
</feature>
<feature type="disulfide bond" description="Redox-active" evidence="1">
    <location>
        <begin position="228"/>
        <end position="454"/>
    </location>
</feature>
<proteinExistence type="evidence at protein level"/>
<keyword id="KW-0021">Allosteric enzyme</keyword>
<keyword id="KW-0067">ATP-binding</keyword>
<keyword id="KW-0215">Deoxyribonucleotide synthesis</keyword>
<keyword id="KW-1015">Disulfide bond</keyword>
<keyword id="KW-0547">Nucleotide-binding</keyword>
<keyword id="KW-0560">Oxidoreductase</keyword>